<proteinExistence type="inferred from homology"/>
<reference key="1">
    <citation type="journal article" date="2007" name="Genome Res.">
        <title>Lateral gene transfer between obligate intracellular bacteria: evidence from the Rickettsia massiliae genome.</title>
        <authorList>
            <person name="Blanc G."/>
            <person name="Ogata H."/>
            <person name="Robert C."/>
            <person name="Audic S."/>
            <person name="Claverie J.-M."/>
            <person name="Raoult D."/>
        </authorList>
    </citation>
    <scope>NUCLEOTIDE SEQUENCE [LARGE SCALE GENOMIC DNA]</scope>
    <source>
        <strain>Mtu5</strain>
    </source>
</reference>
<gene>
    <name evidence="1" type="primary">rpmC</name>
    <name type="ordered locus">RMA_1032</name>
</gene>
<evidence type="ECO:0000255" key="1">
    <source>
        <dbReference type="HAMAP-Rule" id="MF_00374"/>
    </source>
</evidence>
<evidence type="ECO:0000305" key="2"/>
<feature type="chain" id="PRO_1000059972" description="Large ribosomal subunit protein uL29">
    <location>
        <begin position="1"/>
        <end position="71"/>
    </location>
</feature>
<comment type="similarity">
    <text evidence="1">Belongs to the universal ribosomal protein uL29 family.</text>
</comment>
<organism>
    <name type="scientific">Rickettsia massiliae (strain Mtu5)</name>
    <dbReference type="NCBI Taxonomy" id="416276"/>
    <lineage>
        <taxon>Bacteria</taxon>
        <taxon>Pseudomonadati</taxon>
        <taxon>Pseudomonadota</taxon>
        <taxon>Alphaproteobacteria</taxon>
        <taxon>Rickettsiales</taxon>
        <taxon>Rickettsiaceae</taxon>
        <taxon>Rickettsieae</taxon>
        <taxon>Rickettsia</taxon>
        <taxon>spotted fever group</taxon>
    </lineage>
</organism>
<keyword id="KW-0687">Ribonucleoprotein</keyword>
<keyword id="KW-0689">Ribosomal protein</keyword>
<protein>
    <recommendedName>
        <fullName evidence="1">Large ribosomal subunit protein uL29</fullName>
    </recommendedName>
    <alternativeName>
        <fullName evidence="2">50S ribosomal protein L29</fullName>
    </alternativeName>
</protein>
<dbReference type="EMBL" id="CP000683">
    <property type="protein sequence ID" value="ABV85075.1"/>
    <property type="molecule type" value="Genomic_DNA"/>
</dbReference>
<dbReference type="RefSeq" id="WP_012153041.1">
    <property type="nucleotide sequence ID" value="NC_009900.1"/>
</dbReference>
<dbReference type="SMR" id="A8F2D9"/>
<dbReference type="KEGG" id="rms:RMA_1032"/>
<dbReference type="HOGENOM" id="CLU_158491_1_0_5"/>
<dbReference type="Proteomes" id="UP000001311">
    <property type="component" value="Chromosome"/>
</dbReference>
<dbReference type="GO" id="GO:0022625">
    <property type="term" value="C:cytosolic large ribosomal subunit"/>
    <property type="evidence" value="ECO:0007669"/>
    <property type="project" value="TreeGrafter"/>
</dbReference>
<dbReference type="GO" id="GO:0003735">
    <property type="term" value="F:structural constituent of ribosome"/>
    <property type="evidence" value="ECO:0007669"/>
    <property type="project" value="InterPro"/>
</dbReference>
<dbReference type="GO" id="GO:0006412">
    <property type="term" value="P:translation"/>
    <property type="evidence" value="ECO:0007669"/>
    <property type="project" value="UniProtKB-UniRule"/>
</dbReference>
<dbReference type="CDD" id="cd00427">
    <property type="entry name" value="Ribosomal_L29_HIP"/>
    <property type="match status" value="1"/>
</dbReference>
<dbReference type="FunFam" id="1.10.287.310:FF:000001">
    <property type="entry name" value="50S ribosomal protein L29"/>
    <property type="match status" value="1"/>
</dbReference>
<dbReference type="Gene3D" id="1.10.287.310">
    <property type="match status" value="1"/>
</dbReference>
<dbReference type="HAMAP" id="MF_00374">
    <property type="entry name" value="Ribosomal_uL29"/>
    <property type="match status" value="1"/>
</dbReference>
<dbReference type="InterPro" id="IPR050063">
    <property type="entry name" value="Ribosomal_protein_uL29"/>
</dbReference>
<dbReference type="InterPro" id="IPR001854">
    <property type="entry name" value="Ribosomal_uL29"/>
</dbReference>
<dbReference type="InterPro" id="IPR036049">
    <property type="entry name" value="Ribosomal_uL29_sf"/>
</dbReference>
<dbReference type="NCBIfam" id="TIGR00012">
    <property type="entry name" value="L29"/>
    <property type="match status" value="1"/>
</dbReference>
<dbReference type="PANTHER" id="PTHR10916">
    <property type="entry name" value="60S RIBOSOMAL PROTEIN L35/50S RIBOSOMAL PROTEIN L29"/>
    <property type="match status" value="1"/>
</dbReference>
<dbReference type="PANTHER" id="PTHR10916:SF0">
    <property type="entry name" value="LARGE RIBOSOMAL SUBUNIT PROTEIN UL29C"/>
    <property type="match status" value="1"/>
</dbReference>
<dbReference type="Pfam" id="PF00831">
    <property type="entry name" value="Ribosomal_L29"/>
    <property type="match status" value="1"/>
</dbReference>
<dbReference type="SUPFAM" id="SSF46561">
    <property type="entry name" value="Ribosomal protein L29 (L29p)"/>
    <property type="match status" value="1"/>
</dbReference>
<name>RL29_RICM5</name>
<accession>A8F2D9</accession>
<sequence>MNDLKLLRSKLSTETIEELYKNLNLLKKELFNLRFQQALGELKNTSRFLLVKKSIARIKTELTKRSNSEEY</sequence>